<keyword id="KW-0997">Cell inner membrane</keyword>
<keyword id="KW-1003">Cell membrane</keyword>
<keyword id="KW-0407">Ion channel</keyword>
<keyword id="KW-0406">Ion transport</keyword>
<keyword id="KW-0472">Membrane</keyword>
<keyword id="KW-0479">Metal-binding</keyword>
<keyword id="KW-1185">Reference proteome</keyword>
<keyword id="KW-0915">Sodium</keyword>
<keyword id="KW-0812">Transmembrane</keyword>
<keyword id="KW-1133">Transmembrane helix</keyword>
<keyword id="KW-0813">Transport</keyword>
<dbReference type="EMBL" id="AL590842">
    <property type="protein sequence ID" value="CAL21219.1"/>
    <property type="molecule type" value="Genomic_DNA"/>
</dbReference>
<dbReference type="EMBL" id="AE009952">
    <property type="protein sequence ID" value="AAM84745.1"/>
    <property type="status" value="ALT_INIT"/>
    <property type="molecule type" value="Genomic_DNA"/>
</dbReference>
<dbReference type="EMBL" id="AE017042">
    <property type="protein sequence ID" value="AAS61364.1"/>
    <property type="status" value="ALT_INIT"/>
    <property type="molecule type" value="Genomic_DNA"/>
</dbReference>
<dbReference type="PIR" id="AH0316">
    <property type="entry name" value="AH0316"/>
</dbReference>
<dbReference type="RefSeq" id="YP_002347552.1">
    <property type="nucleotide sequence ID" value="NC_003143.1"/>
</dbReference>
<dbReference type="SMR" id="Q8ZDH2"/>
<dbReference type="STRING" id="214092.YPO2596"/>
<dbReference type="PaxDb" id="214092-YPO2596"/>
<dbReference type="DNASU" id="1146115"/>
<dbReference type="EnsemblBacteria" id="AAS61364">
    <property type="protein sequence ID" value="AAS61364"/>
    <property type="gene ID" value="YP_1118"/>
</dbReference>
<dbReference type="KEGG" id="ype:YPO2596"/>
<dbReference type="KEGG" id="ypk:y1168"/>
<dbReference type="KEGG" id="ypm:YP_1118"/>
<dbReference type="PATRIC" id="fig|214092.21.peg.3024"/>
<dbReference type="eggNOG" id="COG0239">
    <property type="taxonomic scope" value="Bacteria"/>
</dbReference>
<dbReference type="HOGENOM" id="CLU_114342_3_3_6"/>
<dbReference type="OMA" id="NDKWLNG"/>
<dbReference type="OrthoDB" id="9806299at2"/>
<dbReference type="Proteomes" id="UP000000815">
    <property type="component" value="Chromosome"/>
</dbReference>
<dbReference type="Proteomes" id="UP000001019">
    <property type="component" value="Chromosome"/>
</dbReference>
<dbReference type="Proteomes" id="UP000002490">
    <property type="component" value="Chromosome"/>
</dbReference>
<dbReference type="GO" id="GO:0005886">
    <property type="term" value="C:plasma membrane"/>
    <property type="evidence" value="ECO:0000318"/>
    <property type="project" value="GO_Central"/>
</dbReference>
<dbReference type="GO" id="GO:0062054">
    <property type="term" value="F:fluoride channel activity"/>
    <property type="evidence" value="ECO:0007669"/>
    <property type="project" value="UniProtKB-UniRule"/>
</dbReference>
<dbReference type="GO" id="GO:1903425">
    <property type="term" value="F:fluoride transmembrane transporter activity"/>
    <property type="evidence" value="ECO:0000318"/>
    <property type="project" value="GO_Central"/>
</dbReference>
<dbReference type="GO" id="GO:0046872">
    <property type="term" value="F:metal ion binding"/>
    <property type="evidence" value="ECO:0007669"/>
    <property type="project" value="UniProtKB-KW"/>
</dbReference>
<dbReference type="GO" id="GO:0140114">
    <property type="term" value="P:cellular detoxification of fluoride"/>
    <property type="evidence" value="ECO:0007669"/>
    <property type="project" value="UniProtKB-UniRule"/>
</dbReference>
<dbReference type="GO" id="GO:1903424">
    <property type="term" value="P:fluoride transmembrane transport"/>
    <property type="evidence" value="ECO:0000318"/>
    <property type="project" value="GO_Central"/>
</dbReference>
<dbReference type="HAMAP" id="MF_00454">
    <property type="entry name" value="FluC"/>
    <property type="match status" value="1"/>
</dbReference>
<dbReference type="InterPro" id="IPR003691">
    <property type="entry name" value="FluC"/>
</dbReference>
<dbReference type="NCBIfam" id="TIGR00494">
    <property type="entry name" value="crcB"/>
    <property type="match status" value="1"/>
</dbReference>
<dbReference type="NCBIfam" id="NF010792">
    <property type="entry name" value="PRK14196.1"/>
    <property type="match status" value="1"/>
</dbReference>
<dbReference type="PANTHER" id="PTHR28259">
    <property type="entry name" value="FLUORIDE EXPORT PROTEIN 1-RELATED"/>
    <property type="match status" value="1"/>
</dbReference>
<dbReference type="PANTHER" id="PTHR28259:SF1">
    <property type="entry name" value="FLUORIDE EXPORT PROTEIN 1-RELATED"/>
    <property type="match status" value="1"/>
</dbReference>
<dbReference type="Pfam" id="PF02537">
    <property type="entry name" value="CRCB"/>
    <property type="match status" value="1"/>
</dbReference>
<feature type="chain" id="PRO_0000110215" description="Fluoride-specific ion channel FluC 1">
    <location>
        <begin position="1"/>
        <end position="127"/>
    </location>
</feature>
<feature type="transmembrane region" description="Helical" evidence="1">
    <location>
        <begin position="4"/>
        <end position="24"/>
    </location>
</feature>
<feature type="transmembrane region" description="Helical" evidence="1">
    <location>
        <begin position="35"/>
        <end position="55"/>
    </location>
</feature>
<feature type="transmembrane region" description="Helical" evidence="1">
    <location>
        <begin position="71"/>
        <end position="91"/>
    </location>
</feature>
<feature type="transmembrane region" description="Helical" evidence="1">
    <location>
        <begin position="101"/>
        <end position="121"/>
    </location>
</feature>
<feature type="binding site" evidence="1">
    <location>
        <position position="75"/>
    </location>
    <ligand>
        <name>Na(+)</name>
        <dbReference type="ChEBI" id="CHEBI:29101"/>
        <note>structural</note>
    </ligand>
</feature>
<feature type="binding site" evidence="1">
    <location>
        <position position="78"/>
    </location>
    <ligand>
        <name>Na(+)</name>
        <dbReference type="ChEBI" id="CHEBI:29101"/>
        <note>structural</note>
    </ligand>
</feature>
<protein>
    <recommendedName>
        <fullName evidence="1">Fluoride-specific ion channel FluC 1</fullName>
    </recommendedName>
</protein>
<organism>
    <name type="scientific">Yersinia pestis</name>
    <dbReference type="NCBI Taxonomy" id="632"/>
    <lineage>
        <taxon>Bacteria</taxon>
        <taxon>Pseudomonadati</taxon>
        <taxon>Pseudomonadota</taxon>
        <taxon>Gammaproteobacteria</taxon>
        <taxon>Enterobacterales</taxon>
        <taxon>Yersiniaceae</taxon>
        <taxon>Yersinia</taxon>
    </lineage>
</organism>
<comment type="function">
    <text evidence="1">Fluoride-specific ion channel. Important for reducing fluoride concentration in the cell, thus reducing its toxicity.</text>
</comment>
<comment type="catalytic activity">
    <reaction evidence="1">
        <text>fluoride(in) = fluoride(out)</text>
        <dbReference type="Rhea" id="RHEA:76159"/>
        <dbReference type="ChEBI" id="CHEBI:17051"/>
    </reaction>
    <physiologicalReaction direction="left-to-right" evidence="1">
        <dbReference type="Rhea" id="RHEA:76160"/>
    </physiologicalReaction>
</comment>
<comment type="activity regulation">
    <text evidence="1">Na(+) is not transported, but it plays an essential structural role and its presence is essential for fluoride channel function.</text>
</comment>
<comment type="subcellular location">
    <subcellularLocation>
        <location evidence="1">Cell inner membrane</location>
        <topology evidence="1">Multi-pass membrane protein</topology>
    </subcellularLocation>
</comment>
<comment type="similarity">
    <text evidence="1">Belongs to the fluoride channel Fluc/FEX (TC 1.A.43) family.</text>
</comment>
<comment type="sequence caution" evidence="2">
    <conflict type="erroneous initiation">
        <sequence resource="EMBL-CDS" id="AAM84745"/>
    </conflict>
</comment>
<comment type="sequence caution" evidence="2">
    <conflict type="erroneous initiation">
        <sequence resource="EMBL-CDS" id="AAS61364"/>
    </conflict>
</comment>
<name>FLUC1_YERPE</name>
<evidence type="ECO:0000255" key="1">
    <source>
        <dbReference type="HAMAP-Rule" id="MF_00454"/>
    </source>
</evidence>
<evidence type="ECO:0000305" key="2"/>
<gene>
    <name evidence="1" type="primary">fluC1</name>
    <name evidence="1" type="synonym">crcB1</name>
    <name type="ordered locus">YPO2596</name>
    <name type="ordered locus">y1168</name>
    <name type="ordered locus">YP_1118</name>
</gene>
<reference key="1">
    <citation type="journal article" date="2001" name="Nature">
        <title>Genome sequence of Yersinia pestis, the causative agent of plague.</title>
        <authorList>
            <person name="Parkhill J."/>
            <person name="Wren B.W."/>
            <person name="Thomson N.R."/>
            <person name="Titball R.W."/>
            <person name="Holden M.T.G."/>
            <person name="Prentice M.B."/>
            <person name="Sebaihia M."/>
            <person name="James K.D."/>
            <person name="Churcher C.M."/>
            <person name="Mungall K.L."/>
            <person name="Baker S."/>
            <person name="Basham D."/>
            <person name="Bentley S.D."/>
            <person name="Brooks K."/>
            <person name="Cerdeno-Tarraga A.-M."/>
            <person name="Chillingworth T."/>
            <person name="Cronin A."/>
            <person name="Davies R.M."/>
            <person name="Davis P."/>
            <person name="Dougan G."/>
            <person name="Feltwell T."/>
            <person name="Hamlin N."/>
            <person name="Holroyd S."/>
            <person name="Jagels K."/>
            <person name="Karlyshev A.V."/>
            <person name="Leather S."/>
            <person name="Moule S."/>
            <person name="Oyston P.C.F."/>
            <person name="Quail M.A."/>
            <person name="Rutherford K.M."/>
            <person name="Simmonds M."/>
            <person name="Skelton J."/>
            <person name="Stevens K."/>
            <person name="Whitehead S."/>
            <person name="Barrell B.G."/>
        </authorList>
    </citation>
    <scope>NUCLEOTIDE SEQUENCE [LARGE SCALE GENOMIC DNA]</scope>
    <source>
        <strain>CO-92 / Biovar Orientalis</strain>
    </source>
</reference>
<reference key="2">
    <citation type="journal article" date="2002" name="J. Bacteriol.">
        <title>Genome sequence of Yersinia pestis KIM.</title>
        <authorList>
            <person name="Deng W."/>
            <person name="Burland V."/>
            <person name="Plunkett G. III"/>
            <person name="Boutin A."/>
            <person name="Mayhew G.F."/>
            <person name="Liss P."/>
            <person name="Perna N.T."/>
            <person name="Rose D.J."/>
            <person name="Mau B."/>
            <person name="Zhou S."/>
            <person name="Schwartz D.C."/>
            <person name="Fetherston J.D."/>
            <person name="Lindler L.E."/>
            <person name="Brubaker R.R."/>
            <person name="Plano G.V."/>
            <person name="Straley S.C."/>
            <person name="McDonough K.A."/>
            <person name="Nilles M.L."/>
            <person name="Matson J.S."/>
            <person name="Blattner F.R."/>
            <person name="Perry R.D."/>
        </authorList>
    </citation>
    <scope>NUCLEOTIDE SEQUENCE [LARGE SCALE GENOMIC DNA]</scope>
    <source>
        <strain>KIM10+ / Biovar Mediaevalis</strain>
    </source>
</reference>
<reference key="3">
    <citation type="journal article" date="2004" name="DNA Res.">
        <title>Complete genome sequence of Yersinia pestis strain 91001, an isolate avirulent to humans.</title>
        <authorList>
            <person name="Song Y."/>
            <person name="Tong Z."/>
            <person name="Wang J."/>
            <person name="Wang L."/>
            <person name="Guo Z."/>
            <person name="Han Y."/>
            <person name="Zhang J."/>
            <person name="Pei D."/>
            <person name="Zhou D."/>
            <person name="Qin H."/>
            <person name="Pang X."/>
            <person name="Han Y."/>
            <person name="Zhai J."/>
            <person name="Li M."/>
            <person name="Cui B."/>
            <person name="Qi Z."/>
            <person name="Jin L."/>
            <person name="Dai R."/>
            <person name="Chen F."/>
            <person name="Li S."/>
            <person name="Ye C."/>
            <person name="Du Z."/>
            <person name="Lin W."/>
            <person name="Wang J."/>
            <person name="Yu J."/>
            <person name="Yang H."/>
            <person name="Wang J."/>
            <person name="Huang P."/>
            <person name="Yang R."/>
        </authorList>
    </citation>
    <scope>NUCLEOTIDE SEQUENCE [LARGE SCALE GENOMIC DNA]</scope>
    <source>
        <strain>91001 / Biovar Mediaevalis</strain>
    </source>
</reference>
<proteinExistence type="inferred from homology"/>
<sequence>MFNTLLAVFIGGGVGSMARWLVSLKLNSASAHLPVGTLIVNLVGAFIIGLTLAFFSRMTHIDPVWKLLITTGFCGGLTTFSTFSVEVVYLIQEGKLAWAAGTILLNVAGSLAMTMLAFILVNNFASQ</sequence>
<accession>Q8ZDH2</accession>
<accession>Q0WDT6</accession>